<accession>B8GMM6</accession>
<sequence>MLLSLFEFLSEYYRGFNVFQYLTLRAILGVLTALIIAFLVGPAMIRRLSLYKIGQQVRTDGPQTHLTKAGTPTMGGALILVAVAVSTLLWSDLSNRFVWVVLMVTLLFGLIGGIDDYRKLRYGNSKGLSARTKFFWQSVVGFATAILLYYTAQAPVETTFFVPLFKDVAIQLGPWFILLTWFVIVGASNAVNLTDGLDGLAIMPTVLVAGAFGVFAYLSGHAVFANYLGIPYVPGVGDLVVFTGALVGAGLGFLWFNAYPAQVFMGDVGALALGAALGVLAVVTRQEIVLVIMGGVFVVETLSVIMQVVSYKLTGRRIFRMAPLHHHFELKGWPEPRVIVRFWIITVILVLVGLATLKLR</sequence>
<organism>
    <name type="scientific">Thioalkalivibrio sulfidiphilus (strain HL-EbGR7)</name>
    <dbReference type="NCBI Taxonomy" id="396588"/>
    <lineage>
        <taxon>Bacteria</taxon>
        <taxon>Pseudomonadati</taxon>
        <taxon>Pseudomonadota</taxon>
        <taxon>Gammaproteobacteria</taxon>
        <taxon>Chromatiales</taxon>
        <taxon>Ectothiorhodospiraceae</taxon>
        <taxon>Thioalkalivibrio</taxon>
    </lineage>
</organism>
<dbReference type="EC" id="2.7.8.13" evidence="1"/>
<dbReference type="EMBL" id="CP001339">
    <property type="protein sequence ID" value="ACL71858.1"/>
    <property type="molecule type" value="Genomic_DNA"/>
</dbReference>
<dbReference type="RefSeq" id="WP_012637346.1">
    <property type="nucleotide sequence ID" value="NC_011901.1"/>
</dbReference>
<dbReference type="SMR" id="B8GMM6"/>
<dbReference type="STRING" id="396588.Tgr7_0766"/>
<dbReference type="KEGG" id="tgr:Tgr7_0766"/>
<dbReference type="eggNOG" id="COG0472">
    <property type="taxonomic scope" value="Bacteria"/>
</dbReference>
<dbReference type="HOGENOM" id="CLU_023982_0_0_6"/>
<dbReference type="OrthoDB" id="9805475at2"/>
<dbReference type="UniPathway" id="UPA00219"/>
<dbReference type="Proteomes" id="UP000002383">
    <property type="component" value="Chromosome"/>
</dbReference>
<dbReference type="GO" id="GO:0005886">
    <property type="term" value="C:plasma membrane"/>
    <property type="evidence" value="ECO:0007669"/>
    <property type="project" value="UniProtKB-SubCell"/>
</dbReference>
<dbReference type="GO" id="GO:0046872">
    <property type="term" value="F:metal ion binding"/>
    <property type="evidence" value="ECO:0007669"/>
    <property type="project" value="UniProtKB-KW"/>
</dbReference>
<dbReference type="GO" id="GO:0008963">
    <property type="term" value="F:phospho-N-acetylmuramoyl-pentapeptide-transferase activity"/>
    <property type="evidence" value="ECO:0007669"/>
    <property type="project" value="UniProtKB-UniRule"/>
</dbReference>
<dbReference type="GO" id="GO:0051992">
    <property type="term" value="F:UDP-N-acetylmuramoyl-L-alanyl-D-glutamyl-meso-2,6-diaminopimelyl-D-alanyl-D-alanine:undecaprenyl-phosphate transferase activity"/>
    <property type="evidence" value="ECO:0007669"/>
    <property type="project" value="RHEA"/>
</dbReference>
<dbReference type="GO" id="GO:0051301">
    <property type="term" value="P:cell division"/>
    <property type="evidence" value="ECO:0007669"/>
    <property type="project" value="UniProtKB-KW"/>
</dbReference>
<dbReference type="GO" id="GO:0071555">
    <property type="term" value="P:cell wall organization"/>
    <property type="evidence" value="ECO:0007669"/>
    <property type="project" value="UniProtKB-KW"/>
</dbReference>
<dbReference type="GO" id="GO:0009252">
    <property type="term" value="P:peptidoglycan biosynthetic process"/>
    <property type="evidence" value="ECO:0007669"/>
    <property type="project" value="UniProtKB-UniRule"/>
</dbReference>
<dbReference type="GO" id="GO:0008360">
    <property type="term" value="P:regulation of cell shape"/>
    <property type="evidence" value="ECO:0007669"/>
    <property type="project" value="UniProtKB-KW"/>
</dbReference>
<dbReference type="CDD" id="cd06852">
    <property type="entry name" value="GT_MraY"/>
    <property type="match status" value="1"/>
</dbReference>
<dbReference type="HAMAP" id="MF_00038">
    <property type="entry name" value="MraY"/>
    <property type="match status" value="1"/>
</dbReference>
<dbReference type="InterPro" id="IPR000715">
    <property type="entry name" value="Glycosyl_transferase_4"/>
</dbReference>
<dbReference type="InterPro" id="IPR003524">
    <property type="entry name" value="PNAcMuramoyl-5peptid_Trfase"/>
</dbReference>
<dbReference type="InterPro" id="IPR018480">
    <property type="entry name" value="PNAcMuramoyl-5peptid_Trfase_CS"/>
</dbReference>
<dbReference type="NCBIfam" id="TIGR00445">
    <property type="entry name" value="mraY"/>
    <property type="match status" value="1"/>
</dbReference>
<dbReference type="PANTHER" id="PTHR22926">
    <property type="entry name" value="PHOSPHO-N-ACETYLMURAMOYL-PENTAPEPTIDE-TRANSFERASE"/>
    <property type="match status" value="1"/>
</dbReference>
<dbReference type="PANTHER" id="PTHR22926:SF5">
    <property type="entry name" value="PHOSPHO-N-ACETYLMURAMOYL-PENTAPEPTIDE-TRANSFERASE HOMOLOG"/>
    <property type="match status" value="1"/>
</dbReference>
<dbReference type="Pfam" id="PF00953">
    <property type="entry name" value="Glycos_transf_4"/>
    <property type="match status" value="1"/>
</dbReference>
<dbReference type="Pfam" id="PF10555">
    <property type="entry name" value="MraY_sig1"/>
    <property type="match status" value="1"/>
</dbReference>
<dbReference type="PROSITE" id="PS01347">
    <property type="entry name" value="MRAY_1"/>
    <property type="match status" value="1"/>
</dbReference>
<dbReference type="PROSITE" id="PS01348">
    <property type="entry name" value="MRAY_2"/>
    <property type="match status" value="1"/>
</dbReference>
<comment type="function">
    <text evidence="1">Catalyzes the initial step of the lipid cycle reactions in the biosynthesis of the cell wall peptidoglycan: transfers peptidoglycan precursor phospho-MurNAc-pentapeptide from UDP-MurNAc-pentapeptide onto the lipid carrier undecaprenyl phosphate, yielding undecaprenyl-pyrophosphoryl-MurNAc-pentapeptide, known as lipid I.</text>
</comment>
<comment type="catalytic activity">
    <reaction evidence="1">
        <text>UDP-N-acetyl-alpha-D-muramoyl-L-alanyl-gamma-D-glutamyl-meso-2,6-diaminopimeloyl-D-alanyl-D-alanine + di-trans,octa-cis-undecaprenyl phosphate = di-trans,octa-cis-undecaprenyl diphospho-N-acetyl-alpha-D-muramoyl-L-alanyl-D-glutamyl-meso-2,6-diaminopimeloyl-D-alanyl-D-alanine + UMP</text>
        <dbReference type="Rhea" id="RHEA:28386"/>
        <dbReference type="ChEBI" id="CHEBI:57865"/>
        <dbReference type="ChEBI" id="CHEBI:60392"/>
        <dbReference type="ChEBI" id="CHEBI:61386"/>
        <dbReference type="ChEBI" id="CHEBI:61387"/>
        <dbReference type="EC" id="2.7.8.13"/>
    </reaction>
</comment>
<comment type="cofactor">
    <cofactor evidence="1">
        <name>Mg(2+)</name>
        <dbReference type="ChEBI" id="CHEBI:18420"/>
    </cofactor>
</comment>
<comment type="pathway">
    <text evidence="1">Cell wall biogenesis; peptidoglycan biosynthesis.</text>
</comment>
<comment type="subcellular location">
    <subcellularLocation>
        <location evidence="1">Cell inner membrane</location>
        <topology evidence="1">Multi-pass membrane protein</topology>
    </subcellularLocation>
</comment>
<comment type="similarity">
    <text evidence="1">Belongs to the glycosyltransferase 4 family. MraY subfamily.</text>
</comment>
<evidence type="ECO:0000255" key="1">
    <source>
        <dbReference type="HAMAP-Rule" id="MF_00038"/>
    </source>
</evidence>
<reference key="1">
    <citation type="journal article" date="2011" name="Stand. Genomic Sci.">
        <title>Complete genome sequence of 'Thioalkalivibrio sulfidophilus' HL-EbGr7.</title>
        <authorList>
            <person name="Muyzer G."/>
            <person name="Sorokin D.Y."/>
            <person name="Mavromatis K."/>
            <person name="Lapidus A."/>
            <person name="Clum A."/>
            <person name="Ivanova N."/>
            <person name="Pati A."/>
            <person name="d'Haeseleer P."/>
            <person name="Woyke T."/>
            <person name="Kyrpides N.C."/>
        </authorList>
    </citation>
    <scope>NUCLEOTIDE SEQUENCE [LARGE SCALE GENOMIC DNA]</scope>
    <source>
        <strain>HL-EbGR7</strain>
    </source>
</reference>
<proteinExistence type="inferred from homology"/>
<keyword id="KW-0131">Cell cycle</keyword>
<keyword id="KW-0132">Cell division</keyword>
<keyword id="KW-0997">Cell inner membrane</keyword>
<keyword id="KW-1003">Cell membrane</keyword>
<keyword id="KW-0133">Cell shape</keyword>
<keyword id="KW-0961">Cell wall biogenesis/degradation</keyword>
<keyword id="KW-0460">Magnesium</keyword>
<keyword id="KW-0472">Membrane</keyword>
<keyword id="KW-0479">Metal-binding</keyword>
<keyword id="KW-0573">Peptidoglycan synthesis</keyword>
<keyword id="KW-1185">Reference proteome</keyword>
<keyword id="KW-0808">Transferase</keyword>
<keyword id="KW-0812">Transmembrane</keyword>
<keyword id="KW-1133">Transmembrane helix</keyword>
<feature type="chain" id="PRO_1000117204" description="Phospho-N-acetylmuramoyl-pentapeptide-transferase">
    <location>
        <begin position="1"/>
        <end position="360"/>
    </location>
</feature>
<feature type="transmembrane region" description="Helical" evidence="1">
    <location>
        <begin position="26"/>
        <end position="46"/>
    </location>
</feature>
<feature type="transmembrane region" description="Helical" evidence="1">
    <location>
        <begin position="70"/>
        <end position="90"/>
    </location>
</feature>
<feature type="transmembrane region" description="Helical" evidence="1">
    <location>
        <begin position="97"/>
        <end position="117"/>
    </location>
</feature>
<feature type="transmembrane region" description="Helical" evidence="1">
    <location>
        <begin position="134"/>
        <end position="154"/>
    </location>
</feature>
<feature type="transmembrane region" description="Helical" evidence="1">
    <location>
        <begin position="168"/>
        <end position="188"/>
    </location>
</feature>
<feature type="transmembrane region" description="Helical" evidence="1">
    <location>
        <begin position="199"/>
        <end position="219"/>
    </location>
</feature>
<feature type="transmembrane region" description="Helical" evidence="1">
    <location>
        <begin position="236"/>
        <end position="256"/>
    </location>
</feature>
<feature type="transmembrane region" description="Helical" evidence="1">
    <location>
        <begin position="263"/>
        <end position="283"/>
    </location>
</feature>
<feature type="transmembrane region" description="Helical" evidence="1">
    <location>
        <begin position="288"/>
        <end position="308"/>
    </location>
</feature>
<feature type="transmembrane region" description="Helical" evidence="1">
    <location>
        <begin position="338"/>
        <end position="358"/>
    </location>
</feature>
<protein>
    <recommendedName>
        <fullName evidence="1">Phospho-N-acetylmuramoyl-pentapeptide-transferase</fullName>
        <ecNumber evidence="1">2.7.8.13</ecNumber>
    </recommendedName>
    <alternativeName>
        <fullName evidence="1">UDP-MurNAc-pentapeptide phosphotransferase</fullName>
    </alternativeName>
</protein>
<gene>
    <name evidence="1" type="primary">mraY</name>
    <name type="ordered locus">Tgr7_0766</name>
</gene>
<name>MRAY_THISH</name>